<gene>
    <name evidence="4" type="primary">sbnH</name>
    <name evidence="6" type="ordered locus">SAOUHSC_00082</name>
</gene>
<comment type="function">
    <text evidence="3">Catalyzes the decarboxylation of citryl-L-2,3-diaminopropionic acid to citryl-diaminoethane, the second step in staphyloferrin B biosynthesis.</text>
</comment>
<comment type="catalytic activity">
    <reaction evidence="3">
        <text>2-[(L-alanin-3-ylcarbamoyl)methyl]-2-hydroxybutanedioate + H(+) = 2-[(2-aminoethylcarbamoyl)methyl]-2-hydroxybutanedioate + CO2</text>
        <dbReference type="Rhea" id="RHEA:59120"/>
        <dbReference type="ChEBI" id="CHEBI:15378"/>
        <dbReference type="ChEBI" id="CHEBI:16526"/>
        <dbReference type="ChEBI" id="CHEBI:142969"/>
        <dbReference type="ChEBI" id="CHEBI:142970"/>
        <dbReference type="EC" id="4.1.1.117"/>
    </reaction>
    <physiologicalReaction direction="left-to-right" evidence="3">
        <dbReference type="Rhea" id="RHEA:59121"/>
    </physiologicalReaction>
</comment>
<comment type="cofactor">
    <cofactor evidence="3">
        <name>pyridoxal 5'-phosphate</name>
        <dbReference type="ChEBI" id="CHEBI:597326"/>
    </cofactor>
</comment>
<comment type="pathway">
    <text evidence="3">Siderophore biosynthesis.</text>
</comment>
<comment type="subunit">
    <text evidence="3">Homodimer.</text>
</comment>
<comment type="induction">
    <text evidence="2">Up-regulated under iron-deficient growth conditions. Repressed by Fur under iron-rich growth conditions.</text>
</comment>
<comment type="similarity">
    <text evidence="5">Belongs to the Orn/Lys/Arg decarboxylase class-II family.</text>
</comment>
<protein>
    <recommendedName>
        <fullName evidence="5">2-[(L-alanin-3-ylcarbamoyl)methyl]-2-hydroxybutanedioate decarboxylase</fullName>
        <ecNumber evidence="3">4.1.1.117</ecNumber>
    </recommendedName>
    <alternativeName>
        <fullName evidence="5">Staphyloferrin B biosynthesis protein SbnH</fullName>
    </alternativeName>
</protein>
<sequence length="400" mass="45760">MRIVQPVIEQLKAQSHPVCHYIYDLVGLEHHLQHITSSLPSNCQMYYAMKANSERKILDTISQYVEGFEVASQGEIAKGLAFKPANHIIFGGPGKTDEELRYAVSEGVQRIHVESMHELQRLNAILEDEDKTQHILLRVNLAGPFPNATLHMAGRPTQFGISEDEVDDVIEAALAMPKIHLDGFHFHSISNNLDSNLHVDVVKLYFKKAKAWSEKHRFPLKHINLGGGIGVNYADLTNQFEWDNFVERFKTLIVEQEMEDVTLNFECGRFIVAHIGYYVTEVLDIKKVHGAWYAILRGGTQQFRLPVSWQHNHPFDIYRYKDNPYSFEKVSISRQDTTLVGQLCTPKDVFAREVQIDAISTGDVIVFKYAGAYGWSISHHDFLSHPHPEFIYLTQTKEDE</sequence>
<reference key="1">
    <citation type="journal article" date="2004" name="Infect. Immun.">
        <title>Role of siderophore biosynthesis in virulence of Staphylococcus aureus: identification and characterization of genes involved in production of a siderophore.</title>
        <authorList>
            <person name="Dale S.E."/>
            <person name="Doherty-Kirby A."/>
            <person name="Lajoie G."/>
            <person name="Heinrichs D.E."/>
        </authorList>
    </citation>
    <scope>NUCLEOTIDE SEQUENCE [GENOMIC DNA]</scope>
    <scope>INDUCTION</scope>
</reference>
<reference key="2">
    <citation type="book" date="2006" name="Gram positive pathogens, 2nd edition">
        <title>The Staphylococcus aureus NCTC 8325 genome.</title>
        <editorList>
            <person name="Fischetti V."/>
            <person name="Novick R."/>
            <person name="Ferretti J."/>
            <person name="Portnoy D."/>
            <person name="Rood J."/>
        </editorList>
        <authorList>
            <person name="Gillaspy A.F."/>
            <person name="Worrell V."/>
            <person name="Orvis J."/>
            <person name="Roe B.A."/>
            <person name="Dyer D.W."/>
            <person name="Iandolo J.J."/>
        </authorList>
    </citation>
    <scope>NUCLEOTIDE SEQUENCE [LARGE SCALE GENOMIC DNA]</scope>
    <source>
        <strain>NCTC 8325 / PS 47</strain>
    </source>
</reference>
<reference key="3">
    <citation type="journal article" date="2009" name="Mol. Microbiol.">
        <title>Molecular characterization of staphyloferrin B biosynthesis in Staphylococcus aureus.</title>
        <authorList>
            <person name="Cheung J."/>
            <person name="Beasley F.C."/>
            <person name="Liu S."/>
            <person name="Lajoie G.A."/>
            <person name="Heinrichs D.E."/>
        </authorList>
    </citation>
    <scope>FUNCTION</scope>
    <scope>CATALYTIC ACTIVITY</scope>
    <scope>COFACTOR</scope>
    <scope>PATHWAY</scope>
    <scope>SUBUNIT</scope>
</reference>
<organism>
    <name type="scientific">Staphylococcus aureus (strain NCTC 8325 / PS 47)</name>
    <dbReference type="NCBI Taxonomy" id="93061"/>
    <lineage>
        <taxon>Bacteria</taxon>
        <taxon>Bacillati</taxon>
        <taxon>Bacillota</taxon>
        <taxon>Bacilli</taxon>
        <taxon>Bacillales</taxon>
        <taxon>Staphylococcaceae</taxon>
        <taxon>Staphylococcus</taxon>
    </lineage>
</organism>
<accession>Q2G1M6</accession>
<accession>Q6X7U0</accession>
<proteinExistence type="evidence at protein level"/>
<dbReference type="EC" id="4.1.1.117" evidence="3"/>
<dbReference type="EMBL" id="AY251022">
    <property type="protein sequence ID" value="AAP82070.1"/>
    <property type="molecule type" value="Genomic_DNA"/>
</dbReference>
<dbReference type="EMBL" id="CP000253">
    <property type="protein sequence ID" value="ABD29265.1"/>
    <property type="molecule type" value="Genomic_DNA"/>
</dbReference>
<dbReference type="RefSeq" id="WP_001223700.1">
    <property type="nucleotide sequence ID" value="NZ_LS483365.1"/>
</dbReference>
<dbReference type="RefSeq" id="YP_498682.1">
    <property type="nucleotide sequence ID" value="NC_007795.1"/>
</dbReference>
<dbReference type="SMR" id="Q2G1M6"/>
<dbReference type="STRING" id="93061.SAOUHSC_00082"/>
<dbReference type="PaxDb" id="1280-SAXN108_0110"/>
<dbReference type="GeneID" id="3919460"/>
<dbReference type="KEGG" id="sao:SAOUHSC_00082"/>
<dbReference type="PATRIC" id="fig|1280.3350.peg.101"/>
<dbReference type="eggNOG" id="COG0019">
    <property type="taxonomic scope" value="Bacteria"/>
</dbReference>
<dbReference type="HOGENOM" id="CLU_026444_0_3_9"/>
<dbReference type="OrthoDB" id="9802241at2"/>
<dbReference type="BioCyc" id="MetaCyc:G1I0R-76-MONOMER"/>
<dbReference type="BRENDA" id="4.1.1.117">
    <property type="organism ID" value="3352"/>
</dbReference>
<dbReference type="Proteomes" id="UP000008816">
    <property type="component" value="Chromosome"/>
</dbReference>
<dbReference type="GO" id="GO:0016831">
    <property type="term" value="F:carboxy-lyase activity"/>
    <property type="evidence" value="ECO:0000314"/>
    <property type="project" value="UniProtKB"/>
</dbReference>
<dbReference type="GO" id="GO:0008836">
    <property type="term" value="F:diaminopimelate decarboxylase activity"/>
    <property type="evidence" value="ECO:0000318"/>
    <property type="project" value="GO_Central"/>
</dbReference>
<dbReference type="GO" id="GO:0009089">
    <property type="term" value="P:lysine biosynthetic process via diaminopimelate"/>
    <property type="evidence" value="ECO:0000318"/>
    <property type="project" value="GO_Central"/>
</dbReference>
<dbReference type="GO" id="GO:0006596">
    <property type="term" value="P:polyamine biosynthetic process"/>
    <property type="evidence" value="ECO:0007669"/>
    <property type="project" value="InterPro"/>
</dbReference>
<dbReference type="GO" id="GO:0019290">
    <property type="term" value="P:siderophore biosynthetic process"/>
    <property type="evidence" value="ECO:0000314"/>
    <property type="project" value="UniProtKB"/>
</dbReference>
<dbReference type="CDD" id="cd06843">
    <property type="entry name" value="PLPDE_III_PvsE_like"/>
    <property type="match status" value="1"/>
</dbReference>
<dbReference type="Gene3D" id="3.20.20.10">
    <property type="entry name" value="Alanine racemase"/>
    <property type="match status" value="1"/>
</dbReference>
<dbReference type="Gene3D" id="2.40.37.10">
    <property type="entry name" value="Lyase, Ornithine Decarboxylase, Chain A, domain 1"/>
    <property type="match status" value="1"/>
</dbReference>
<dbReference type="InterPro" id="IPR009006">
    <property type="entry name" value="Ala_racemase/Decarboxylase_C"/>
</dbReference>
<dbReference type="InterPro" id="IPR022643">
    <property type="entry name" value="De-COase2_C"/>
</dbReference>
<dbReference type="InterPro" id="IPR022644">
    <property type="entry name" value="De-COase2_N"/>
</dbReference>
<dbReference type="InterPro" id="IPR022272">
    <property type="entry name" value="Lipocalin_CS"/>
</dbReference>
<dbReference type="InterPro" id="IPR000183">
    <property type="entry name" value="Orn/DAP/Arg_de-COase"/>
</dbReference>
<dbReference type="InterPro" id="IPR002433">
    <property type="entry name" value="Orn_de-COase"/>
</dbReference>
<dbReference type="InterPro" id="IPR029066">
    <property type="entry name" value="PLP-binding_barrel"/>
</dbReference>
<dbReference type="PANTHER" id="PTHR43727">
    <property type="entry name" value="DIAMINOPIMELATE DECARBOXYLASE"/>
    <property type="match status" value="1"/>
</dbReference>
<dbReference type="PANTHER" id="PTHR43727:SF2">
    <property type="entry name" value="GROUP IV DECARBOXYLASE"/>
    <property type="match status" value="1"/>
</dbReference>
<dbReference type="Pfam" id="PF02784">
    <property type="entry name" value="Orn_Arg_deC_N"/>
    <property type="match status" value="1"/>
</dbReference>
<dbReference type="Pfam" id="PF00278">
    <property type="entry name" value="Orn_DAP_Arg_deC"/>
    <property type="match status" value="1"/>
</dbReference>
<dbReference type="PRINTS" id="PR01179">
    <property type="entry name" value="ODADCRBXLASE"/>
</dbReference>
<dbReference type="PRINTS" id="PR01182">
    <property type="entry name" value="ORNDCRBXLASE"/>
</dbReference>
<dbReference type="SUPFAM" id="SSF50621">
    <property type="entry name" value="Alanine racemase C-terminal domain-like"/>
    <property type="match status" value="1"/>
</dbReference>
<dbReference type="SUPFAM" id="SSF51419">
    <property type="entry name" value="PLP-binding barrel"/>
    <property type="match status" value="1"/>
</dbReference>
<dbReference type="PROSITE" id="PS00879">
    <property type="entry name" value="ODR_DC_2_2"/>
    <property type="match status" value="1"/>
</dbReference>
<keyword id="KW-0210">Decarboxylase</keyword>
<keyword id="KW-0456">Lyase</keyword>
<keyword id="KW-0663">Pyridoxal phosphate</keyword>
<keyword id="KW-1185">Reference proteome</keyword>
<evidence type="ECO:0000250" key="1">
    <source>
        <dbReference type="UniProtKB" id="P00861"/>
    </source>
</evidence>
<evidence type="ECO:0000269" key="2">
    <source>
    </source>
</evidence>
<evidence type="ECO:0000269" key="3">
    <source>
    </source>
</evidence>
<evidence type="ECO:0000303" key="4">
    <source>
    </source>
</evidence>
<evidence type="ECO:0000305" key="5"/>
<evidence type="ECO:0000312" key="6">
    <source>
        <dbReference type="EMBL" id="ABD29265.1"/>
    </source>
</evidence>
<feature type="chain" id="PRO_0000447128" description="2-[(L-alanin-3-ylcarbamoyl)methyl]-2-hydroxybutanedioate decarboxylase">
    <location>
        <begin position="1"/>
        <end position="400"/>
    </location>
</feature>
<feature type="active site" description="Proton donor" evidence="1">
    <location>
        <position position="344"/>
    </location>
</feature>
<feature type="binding site" evidence="1">
    <location>
        <position position="228"/>
    </location>
    <ligand>
        <name>pyridoxal 5'-phosphate</name>
        <dbReference type="ChEBI" id="CHEBI:597326"/>
    </ligand>
</feature>
<feature type="binding site" evidence="1">
    <location>
        <begin position="266"/>
        <end position="269"/>
    </location>
    <ligand>
        <name>pyridoxal 5'-phosphate</name>
        <dbReference type="ChEBI" id="CHEBI:597326"/>
    </ligand>
</feature>
<feature type="binding site" evidence="1">
    <location>
        <position position="373"/>
    </location>
    <ligand>
        <name>pyridoxal 5'-phosphate</name>
        <dbReference type="ChEBI" id="CHEBI:597326"/>
    </ligand>
</feature>
<feature type="modified residue" description="N6-(pyridoxal phosphate)lysine" evidence="1">
    <location>
        <position position="50"/>
    </location>
</feature>
<name>SBNH_STAA8</name>